<proteinExistence type="evidence at protein level"/>
<reference key="1">
    <citation type="journal article" date="1999" name="J. Clin. Microbiol.">
        <title>Characterization of nonenterotoxigenic Escherichia coli strains producing F17 fimbriae isolated from diarrheic lambs and goat kids.</title>
        <authorList>
            <person name="Cid D."/>
            <person name="Sanz R."/>
            <person name="Marin I."/>
            <person name="de Greve H.M.J."/>
            <person name="Ruiz-Santa-Quiteria J.A."/>
            <person name="Amils R."/>
            <person name="de la Fuente R."/>
        </authorList>
    </citation>
    <scope>NUCLEOTIDE SEQUENCE [GENOMIC DNA]</scope>
    <source>
        <strain>CK210</strain>
    </source>
</reference>
<reference key="2">
    <citation type="journal article" date="2005" name="Acta Crystallogr. D">
        <title>Impact of natural variation in bacterial F17G adhesins on crystallization behaviour.</title>
        <authorList>
            <person name="Buts L."/>
            <person name="Wellens A."/>
            <person name="Van Molle I."/>
            <person name="Wyns L."/>
            <person name="Loris R."/>
            <person name="Lahmann M."/>
            <person name="Oscarson S."/>
            <person name="De Greve H.M.J."/>
            <person name="Bouckaert J."/>
        </authorList>
    </citation>
    <scope>X-RAY CRYSTALLOGRAPHY (2.40 ANGSTROMS) OF 23-198 IN COMPLEX WITH N-ACETYL-D-GLUCOSAMINE</scope>
</reference>
<gene>
    <name type="primary">f17eG</name>
</gene>
<dbReference type="EMBL" id="AF055311">
    <property type="protein sequence ID" value="AAD17514.1"/>
    <property type="molecule type" value="Genomic_DNA"/>
</dbReference>
<dbReference type="RefSeq" id="WP_000181224.1">
    <property type="nucleotide sequence ID" value="NZ_BFRX01000080.1"/>
</dbReference>
<dbReference type="PDB" id="2BSB">
    <property type="method" value="X-ray"/>
    <property type="resolution" value="2.40 A"/>
    <property type="chains" value="A=23-198"/>
</dbReference>
<dbReference type="PDBsum" id="2BSB"/>
<dbReference type="SMR" id="Q9RH92"/>
<dbReference type="UniLectin" id="Q9RH92"/>
<dbReference type="PATRIC" id="fig|562.7987.peg.5444"/>
<dbReference type="EvolutionaryTrace" id="Q9RH92"/>
<dbReference type="GO" id="GO:0009289">
    <property type="term" value="C:pilus"/>
    <property type="evidence" value="ECO:0007669"/>
    <property type="project" value="UniProtKB-SubCell"/>
</dbReference>
<dbReference type="GO" id="GO:0030246">
    <property type="term" value="F:carbohydrate binding"/>
    <property type="evidence" value="ECO:0007669"/>
    <property type="project" value="UniProtKB-KW"/>
</dbReference>
<dbReference type="GO" id="GO:0044406">
    <property type="term" value="P:adhesion of symbiont to host"/>
    <property type="evidence" value="ECO:0007669"/>
    <property type="project" value="InterPro"/>
</dbReference>
<dbReference type="GO" id="GO:0043709">
    <property type="term" value="P:cell adhesion involved in single-species biofilm formation"/>
    <property type="evidence" value="ECO:0007669"/>
    <property type="project" value="TreeGrafter"/>
</dbReference>
<dbReference type="Gene3D" id="2.60.40.1410">
    <property type="entry name" value="Bacterial adhesins - F17c-type"/>
    <property type="match status" value="1"/>
</dbReference>
<dbReference type="Gene3D" id="2.60.40.1090">
    <property type="entry name" value="Fimbrial-type adhesion domain"/>
    <property type="match status" value="1"/>
</dbReference>
<dbReference type="InterPro" id="IPR000259">
    <property type="entry name" value="Adhesion_dom_fimbrial"/>
</dbReference>
<dbReference type="InterPro" id="IPR036937">
    <property type="entry name" value="Adhesion_dom_fimbrial_sf"/>
</dbReference>
<dbReference type="InterPro" id="IPR008966">
    <property type="entry name" value="Adhesion_dom_sf"/>
</dbReference>
<dbReference type="InterPro" id="IPR050263">
    <property type="entry name" value="Bact_Fimbrial_Adh_Pro"/>
</dbReference>
<dbReference type="InterPro" id="IPR015303">
    <property type="entry name" value="Fimbrial_adhesin_lectin_dom"/>
</dbReference>
<dbReference type="PANTHER" id="PTHR33420">
    <property type="entry name" value="FIMBRIAL SUBUNIT ELFA-RELATED"/>
    <property type="match status" value="1"/>
</dbReference>
<dbReference type="PANTHER" id="PTHR33420:SF14">
    <property type="entry name" value="TYPE 1 FIMBRIN D-MANNOSE SPECIFIC ADHESIN"/>
    <property type="match status" value="1"/>
</dbReference>
<dbReference type="Pfam" id="PF09222">
    <property type="entry name" value="Fim-adh_lectin"/>
    <property type="match status" value="1"/>
</dbReference>
<dbReference type="Pfam" id="PF00419">
    <property type="entry name" value="Fimbrial"/>
    <property type="match status" value="1"/>
</dbReference>
<dbReference type="SUPFAM" id="SSF49401">
    <property type="entry name" value="Bacterial adhesins"/>
    <property type="match status" value="2"/>
</dbReference>
<keyword id="KW-0002">3D-structure</keyword>
<keyword id="KW-1015">Disulfide bond</keyword>
<keyword id="KW-0281">Fimbrium</keyword>
<keyword id="KW-0430">Lectin</keyword>
<keyword id="KW-0732">Signal</keyword>
<keyword id="KW-0843">Virulence</keyword>
<organism>
    <name type="scientific">Escherichia coli</name>
    <dbReference type="NCBI Taxonomy" id="562"/>
    <lineage>
        <taxon>Bacteria</taxon>
        <taxon>Pseudomonadati</taxon>
        <taxon>Pseudomonadota</taxon>
        <taxon>Gammaproteobacteria</taxon>
        <taxon>Enterobacterales</taxon>
        <taxon>Enterobacteriaceae</taxon>
        <taxon>Escherichia</taxon>
    </lineage>
</organism>
<comment type="function">
    <text evidence="1">Essential fimbrial adhesion factor that mediates binding to N-acetylglucosamine-containing receptors in the host intestinal microvilli, leading to colonization of the intestinal tissue, and diarrhea or septicemia. Also confers adhesiveness to laminin and basement membranes (By similarity).</text>
</comment>
<comment type="subcellular location">
    <subcellularLocation>
        <location evidence="1">Fimbrium</location>
    </subcellularLocation>
    <text evidence="1">Attached to the tip of the fimbrial filaments.</text>
</comment>
<comment type="similarity">
    <text evidence="3">Belongs to the fimbrial protein family.</text>
</comment>
<sequence length="343" mass="36505">MTNFYKVFLAVFILVCCNISHAAVSFIGSTENDVGPSQSSYSRTHAMDNLPFVYNTGYNIGYQNANVWRISGGFCVGLDGKVDLPVVGSLDGQSIYGLTEEVGLLIWMGDTNYSRGTAMSGNSWENVFSGWCVGNYVSTQGLSVHVRPVILKRNSSAQYSVQKTSIGSIRMRPYNGSSAGSVQTTVNFSLNPFTLNDTVTSCRLLTPSAVNVSLAAISAGQLPSSGDEVVAGTTSLKLQCDAGVTVWATLTDATTPSNRSDILTLTGASTATGVGLRIYKNTDSTPLKFGPDSPVKGNENQWQLSTGTETSPSVRLYVKYVNTGEGINPGTVNGISTFTFSYQ</sequence>
<feature type="signal peptide" evidence="1">
    <location>
        <begin position="1"/>
        <end position="22"/>
    </location>
</feature>
<feature type="chain" id="PRO_0000356269" description="F17e-G fimbrial adhesin">
    <location>
        <begin position="23"/>
        <end position="343"/>
    </location>
</feature>
<feature type="region of interest" description="Receptor-binding lectin domain">
    <location>
        <begin position="23"/>
        <end position="199"/>
    </location>
</feature>
<feature type="region of interest" description="Fimbrillin-binding domain">
    <location>
        <begin position="200"/>
        <end position="343"/>
    </location>
</feature>
<feature type="region of interest" description="Disordered" evidence="2">
    <location>
        <begin position="287"/>
        <end position="307"/>
    </location>
</feature>
<feature type="compositionally biased region" description="Polar residues" evidence="2">
    <location>
        <begin position="298"/>
        <end position="307"/>
    </location>
</feature>
<feature type="binding site">
    <location>
        <begin position="65"/>
        <end position="66"/>
    </location>
    <ligand>
        <name>a carbohydrate</name>
        <dbReference type="ChEBI" id="CHEBI:16646"/>
    </ligand>
</feature>
<feature type="binding site">
    <location>
        <begin position="110"/>
        <end position="111"/>
    </location>
    <ligand>
        <name>a carbohydrate</name>
        <dbReference type="ChEBI" id="CHEBI:16646"/>
    </ligand>
</feature>
<feature type="binding site">
    <location>
        <begin position="138"/>
        <end position="141"/>
    </location>
    <ligand>
        <name>a carbohydrate</name>
        <dbReference type="ChEBI" id="CHEBI:16646"/>
    </ligand>
</feature>
<feature type="disulfide bond">
    <location>
        <begin position="75"/>
        <end position="132"/>
    </location>
</feature>
<feature type="strand" evidence="4">
    <location>
        <begin position="24"/>
        <end position="26"/>
    </location>
</feature>
<feature type="strand" evidence="4">
    <location>
        <begin position="30"/>
        <end position="35"/>
    </location>
</feature>
<feature type="strand" evidence="4">
    <location>
        <begin position="59"/>
        <end position="70"/>
    </location>
</feature>
<feature type="strand" evidence="4">
    <location>
        <begin position="75"/>
        <end position="82"/>
    </location>
</feature>
<feature type="strand" evidence="4">
    <location>
        <begin position="86"/>
        <end position="90"/>
    </location>
</feature>
<feature type="strand" evidence="4">
    <location>
        <begin position="93"/>
        <end position="112"/>
    </location>
</feature>
<feature type="helix" evidence="4">
    <location>
        <begin position="113"/>
        <end position="115"/>
    </location>
</feature>
<feature type="strand" evidence="4">
    <location>
        <begin position="116"/>
        <end position="118"/>
    </location>
</feature>
<feature type="strand" evidence="4">
    <location>
        <begin position="121"/>
        <end position="123"/>
    </location>
</feature>
<feature type="strand" evidence="4">
    <location>
        <begin position="125"/>
        <end position="132"/>
    </location>
</feature>
<feature type="strand" evidence="4">
    <location>
        <begin position="138"/>
        <end position="150"/>
    </location>
</feature>
<feature type="strand" evidence="4">
    <location>
        <begin position="164"/>
        <end position="173"/>
    </location>
</feature>
<feature type="strand" evidence="4">
    <location>
        <begin position="185"/>
        <end position="190"/>
    </location>
</feature>
<feature type="strand" evidence="4">
    <location>
        <begin position="193"/>
        <end position="195"/>
    </location>
</feature>
<accession>Q9RH92</accession>
<protein>
    <recommendedName>
        <fullName>F17e-G fimbrial adhesin</fullName>
    </recommendedName>
</protein>
<evidence type="ECO:0000250" key="1"/>
<evidence type="ECO:0000256" key="2">
    <source>
        <dbReference type="SAM" id="MobiDB-lite"/>
    </source>
</evidence>
<evidence type="ECO:0000305" key="3"/>
<evidence type="ECO:0007829" key="4">
    <source>
        <dbReference type="PDB" id="2BSB"/>
    </source>
</evidence>
<name>F17EG_ECOLX</name>